<sequence length="376" mass="40383">MASKDYYEVLGLSKGASDDEIKKAYRKLAMKYHPDRNQGNKEAEEKFKDINEAYQVLSDPQKKANYDQFGSADFNGGGFGGFGGGGFSGMGGFEDIFDSFFGGGFSSRRRNGPERGADLEYTVSLTFEEAVFGVEKEISITRNEKCDTCAGSGAKPGTDSKTCDKCGGTGQVRVQRNTPLGSFVSTSTCDKCGGSGKVIDEPCTTCHGKGTVRKNKKIKINIPAGVDTGNVLPLRGQGEPGKNGGPNGDLYINIRVSSHKNFERRGFDIYIKEHISFGKAVLGTEITVPTVDGSVKYKIPAGTQSGTTFRLKGKGVPRVNGHGRGNQYVKVIVDVPKAINEKQKAALIAFMEASGEKLGSDLGKETIVDKIKKSFK</sequence>
<protein>
    <recommendedName>
        <fullName evidence="1">Chaperone protein DnaJ</fullName>
    </recommendedName>
</protein>
<evidence type="ECO:0000255" key="1">
    <source>
        <dbReference type="HAMAP-Rule" id="MF_01152"/>
    </source>
</evidence>
<accession>A0Q1R3</accession>
<keyword id="KW-0143">Chaperone</keyword>
<keyword id="KW-0963">Cytoplasm</keyword>
<keyword id="KW-0235">DNA replication</keyword>
<keyword id="KW-0479">Metal-binding</keyword>
<keyword id="KW-1185">Reference proteome</keyword>
<keyword id="KW-0677">Repeat</keyword>
<keyword id="KW-0346">Stress response</keyword>
<keyword id="KW-0862">Zinc</keyword>
<keyword id="KW-0863">Zinc-finger</keyword>
<comment type="function">
    <text evidence="1">Participates actively in the response to hyperosmotic and heat shock by preventing the aggregation of stress-denatured proteins and by disaggregating proteins, also in an autonomous, DnaK-independent fashion. Unfolded proteins bind initially to DnaJ; upon interaction with the DnaJ-bound protein, DnaK hydrolyzes its bound ATP, resulting in the formation of a stable complex. GrpE releases ADP from DnaK; ATP binding to DnaK triggers the release of the substrate protein, thus completing the reaction cycle. Several rounds of ATP-dependent interactions between DnaJ, DnaK and GrpE are required for fully efficient folding. Also involved, together with DnaK and GrpE, in the DNA replication of plasmids through activation of initiation proteins.</text>
</comment>
<comment type="cofactor">
    <cofactor evidence="1">
        <name>Zn(2+)</name>
        <dbReference type="ChEBI" id="CHEBI:29105"/>
    </cofactor>
    <text evidence="1">Binds 2 Zn(2+) ions per monomer.</text>
</comment>
<comment type="subunit">
    <text evidence="1">Homodimer.</text>
</comment>
<comment type="subcellular location">
    <subcellularLocation>
        <location evidence="1">Cytoplasm</location>
    </subcellularLocation>
</comment>
<comment type="domain">
    <text evidence="1">The J domain is necessary and sufficient to stimulate DnaK ATPase activity. Zinc center 1 plays an important role in the autonomous, DnaK-independent chaperone activity of DnaJ. Zinc center 2 is essential for interaction with DnaK and for DnaJ activity.</text>
</comment>
<comment type="similarity">
    <text evidence="1">Belongs to the DnaJ family.</text>
</comment>
<proteinExistence type="inferred from homology"/>
<gene>
    <name evidence="1" type="primary">dnaJ</name>
    <name type="ordered locus">NT01CX_0056</name>
</gene>
<name>DNAJ_CLONN</name>
<feature type="chain" id="PRO_1000164254" description="Chaperone protein DnaJ">
    <location>
        <begin position="1"/>
        <end position="376"/>
    </location>
</feature>
<feature type="domain" description="J" evidence="1">
    <location>
        <begin position="5"/>
        <end position="70"/>
    </location>
</feature>
<feature type="repeat" description="CXXCXGXG motif">
    <location>
        <begin position="146"/>
        <end position="153"/>
    </location>
</feature>
<feature type="repeat" description="CXXCXGXG motif">
    <location>
        <begin position="163"/>
        <end position="170"/>
    </location>
</feature>
<feature type="repeat" description="CXXCXGXG motif">
    <location>
        <begin position="189"/>
        <end position="196"/>
    </location>
</feature>
<feature type="repeat" description="CXXCXGXG motif">
    <location>
        <begin position="203"/>
        <end position="210"/>
    </location>
</feature>
<feature type="zinc finger region" description="CR-type" evidence="1">
    <location>
        <begin position="133"/>
        <end position="215"/>
    </location>
</feature>
<feature type="binding site" evidence="1">
    <location>
        <position position="146"/>
    </location>
    <ligand>
        <name>Zn(2+)</name>
        <dbReference type="ChEBI" id="CHEBI:29105"/>
        <label>1</label>
    </ligand>
</feature>
<feature type="binding site" evidence="1">
    <location>
        <position position="149"/>
    </location>
    <ligand>
        <name>Zn(2+)</name>
        <dbReference type="ChEBI" id="CHEBI:29105"/>
        <label>1</label>
    </ligand>
</feature>
<feature type="binding site" evidence="1">
    <location>
        <position position="163"/>
    </location>
    <ligand>
        <name>Zn(2+)</name>
        <dbReference type="ChEBI" id="CHEBI:29105"/>
        <label>2</label>
    </ligand>
</feature>
<feature type="binding site" evidence="1">
    <location>
        <position position="166"/>
    </location>
    <ligand>
        <name>Zn(2+)</name>
        <dbReference type="ChEBI" id="CHEBI:29105"/>
        <label>2</label>
    </ligand>
</feature>
<feature type="binding site" evidence="1">
    <location>
        <position position="189"/>
    </location>
    <ligand>
        <name>Zn(2+)</name>
        <dbReference type="ChEBI" id="CHEBI:29105"/>
        <label>2</label>
    </ligand>
</feature>
<feature type="binding site" evidence="1">
    <location>
        <position position="192"/>
    </location>
    <ligand>
        <name>Zn(2+)</name>
        <dbReference type="ChEBI" id="CHEBI:29105"/>
        <label>2</label>
    </ligand>
</feature>
<feature type="binding site" evidence="1">
    <location>
        <position position="203"/>
    </location>
    <ligand>
        <name>Zn(2+)</name>
        <dbReference type="ChEBI" id="CHEBI:29105"/>
        <label>1</label>
    </ligand>
</feature>
<feature type="binding site" evidence="1">
    <location>
        <position position="206"/>
    </location>
    <ligand>
        <name>Zn(2+)</name>
        <dbReference type="ChEBI" id="CHEBI:29105"/>
        <label>1</label>
    </ligand>
</feature>
<organism>
    <name type="scientific">Clostridium novyi (strain NT)</name>
    <dbReference type="NCBI Taxonomy" id="386415"/>
    <lineage>
        <taxon>Bacteria</taxon>
        <taxon>Bacillati</taxon>
        <taxon>Bacillota</taxon>
        <taxon>Clostridia</taxon>
        <taxon>Eubacteriales</taxon>
        <taxon>Clostridiaceae</taxon>
        <taxon>Clostridium</taxon>
    </lineage>
</organism>
<dbReference type="EMBL" id="CP000382">
    <property type="protein sequence ID" value="ABK61831.1"/>
    <property type="molecule type" value="Genomic_DNA"/>
</dbReference>
<dbReference type="RefSeq" id="WP_011722557.1">
    <property type="nucleotide sequence ID" value="NC_008593.1"/>
</dbReference>
<dbReference type="SMR" id="A0Q1R3"/>
<dbReference type="STRING" id="386415.NT01CX_0056"/>
<dbReference type="KEGG" id="cno:NT01CX_0056"/>
<dbReference type="eggNOG" id="COG0484">
    <property type="taxonomic scope" value="Bacteria"/>
</dbReference>
<dbReference type="HOGENOM" id="CLU_017633_0_7_9"/>
<dbReference type="Proteomes" id="UP000008220">
    <property type="component" value="Chromosome"/>
</dbReference>
<dbReference type="GO" id="GO:0005737">
    <property type="term" value="C:cytoplasm"/>
    <property type="evidence" value="ECO:0007669"/>
    <property type="project" value="UniProtKB-SubCell"/>
</dbReference>
<dbReference type="GO" id="GO:0005524">
    <property type="term" value="F:ATP binding"/>
    <property type="evidence" value="ECO:0007669"/>
    <property type="project" value="InterPro"/>
</dbReference>
<dbReference type="GO" id="GO:0031072">
    <property type="term" value="F:heat shock protein binding"/>
    <property type="evidence" value="ECO:0007669"/>
    <property type="project" value="InterPro"/>
</dbReference>
<dbReference type="GO" id="GO:0051082">
    <property type="term" value="F:unfolded protein binding"/>
    <property type="evidence" value="ECO:0007669"/>
    <property type="project" value="UniProtKB-UniRule"/>
</dbReference>
<dbReference type="GO" id="GO:0008270">
    <property type="term" value="F:zinc ion binding"/>
    <property type="evidence" value="ECO:0007669"/>
    <property type="project" value="UniProtKB-UniRule"/>
</dbReference>
<dbReference type="GO" id="GO:0051085">
    <property type="term" value="P:chaperone cofactor-dependent protein refolding"/>
    <property type="evidence" value="ECO:0007669"/>
    <property type="project" value="TreeGrafter"/>
</dbReference>
<dbReference type="GO" id="GO:0006260">
    <property type="term" value="P:DNA replication"/>
    <property type="evidence" value="ECO:0007669"/>
    <property type="project" value="UniProtKB-KW"/>
</dbReference>
<dbReference type="GO" id="GO:0042026">
    <property type="term" value="P:protein refolding"/>
    <property type="evidence" value="ECO:0007669"/>
    <property type="project" value="TreeGrafter"/>
</dbReference>
<dbReference type="GO" id="GO:0009408">
    <property type="term" value="P:response to heat"/>
    <property type="evidence" value="ECO:0007669"/>
    <property type="project" value="InterPro"/>
</dbReference>
<dbReference type="CDD" id="cd06257">
    <property type="entry name" value="DnaJ"/>
    <property type="match status" value="1"/>
</dbReference>
<dbReference type="CDD" id="cd10747">
    <property type="entry name" value="DnaJ_C"/>
    <property type="match status" value="1"/>
</dbReference>
<dbReference type="CDD" id="cd10719">
    <property type="entry name" value="DnaJ_zf"/>
    <property type="match status" value="1"/>
</dbReference>
<dbReference type="FunFam" id="2.60.260.20:FF:000005">
    <property type="entry name" value="Chaperone protein dnaJ 1, mitochondrial"/>
    <property type="match status" value="1"/>
</dbReference>
<dbReference type="FunFam" id="1.10.287.110:FF:000031">
    <property type="entry name" value="Molecular chaperone DnaJ"/>
    <property type="match status" value="1"/>
</dbReference>
<dbReference type="FunFam" id="2.10.230.10:FF:000002">
    <property type="entry name" value="Molecular chaperone DnaJ"/>
    <property type="match status" value="1"/>
</dbReference>
<dbReference type="Gene3D" id="1.10.287.110">
    <property type="entry name" value="DnaJ domain"/>
    <property type="match status" value="1"/>
</dbReference>
<dbReference type="Gene3D" id="2.10.230.10">
    <property type="entry name" value="Heat shock protein DnaJ, cysteine-rich domain"/>
    <property type="match status" value="1"/>
</dbReference>
<dbReference type="Gene3D" id="2.60.260.20">
    <property type="entry name" value="Urease metallochaperone UreE, N-terminal domain"/>
    <property type="match status" value="2"/>
</dbReference>
<dbReference type="HAMAP" id="MF_01152">
    <property type="entry name" value="DnaJ"/>
    <property type="match status" value="1"/>
</dbReference>
<dbReference type="InterPro" id="IPR012724">
    <property type="entry name" value="DnaJ"/>
</dbReference>
<dbReference type="InterPro" id="IPR002939">
    <property type="entry name" value="DnaJ_C"/>
</dbReference>
<dbReference type="InterPro" id="IPR001623">
    <property type="entry name" value="DnaJ_domain"/>
</dbReference>
<dbReference type="InterPro" id="IPR018253">
    <property type="entry name" value="DnaJ_domain_CS"/>
</dbReference>
<dbReference type="InterPro" id="IPR008971">
    <property type="entry name" value="HSP40/DnaJ_pept-bd"/>
</dbReference>
<dbReference type="InterPro" id="IPR001305">
    <property type="entry name" value="HSP_DnaJ_Cys-rich_dom"/>
</dbReference>
<dbReference type="InterPro" id="IPR036410">
    <property type="entry name" value="HSP_DnaJ_Cys-rich_dom_sf"/>
</dbReference>
<dbReference type="InterPro" id="IPR036869">
    <property type="entry name" value="J_dom_sf"/>
</dbReference>
<dbReference type="NCBIfam" id="TIGR02349">
    <property type="entry name" value="DnaJ_bact"/>
    <property type="match status" value="1"/>
</dbReference>
<dbReference type="NCBIfam" id="NF008035">
    <property type="entry name" value="PRK10767.1"/>
    <property type="match status" value="1"/>
</dbReference>
<dbReference type="NCBIfam" id="NF010890">
    <property type="entry name" value="PRK14297.1"/>
    <property type="match status" value="1"/>
</dbReference>
<dbReference type="PANTHER" id="PTHR43096:SF48">
    <property type="entry name" value="CHAPERONE PROTEIN DNAJ"/>
    <property type="match status" value="1"/>
</dbReference>
<dbReference type="PANTHER" id="PTHR43096">
    <property type="entry name" value="DNAJ HOMOLOG 1, MITOCHONDRIAL-RELATED"/>
    <property type="match status" value="1"/>
</dbReference>
<dbReference type="Pfam" id="PF00226">
    <property type="entry name" value="DnaJ"/>
    <property type="match status" value="1"/>
</dbReference>
<dbReference type="Pfam" id="PF01556">
    <property type="entry name" value="DnaJ_C"/>
    <property type="match status" value="1"/>
</dbReference>
<dbReference type="Pfam" id="PF00684">
    <property type="entry name" value="DnaJ_CXXCXGXG"/>
    <property type="match status" value="1"/>
</dbReference>
<dbReference type="PRINTS" id="PR00625">
    <property type="entry name" value="JDOMAIN"/>
</dbReference>
<dbReference type="SMART" id="SM00271">
    <property type="entry name" value="DnaJ"/>
    <property type="match status" value="1"/>
</dbReference>
<dbReference type="SUPFAM" id="SSF46565">
    <property type="entry name" value="Chaperone J-domain"/>
    <property type="match status" value="1"/>
</dbReference>
<dbReference type="SUPFAM" id="SSF57938">
    <property type="entry name" value="DnaJ/Hsp40 cysteine-rich domain"/>
    <property type="match status" value="1"/>
</dbReference>
<dbReference type="SUPFAM" id="SSF49493">
    <property type="entry name" value="HSP40/DnaJ peptide-binding domain"/>
    <property type="match status" value="2"/>
</dbReference>
<dbReference type="PROSITE" id="PS00636">
    <property type="entry name" value="DNAJ_1"/>
    <property type="match status" value="1"/>
</dbReference>
<dbReference type="PROSITE" id="PS50076">
    <property type="entry name" value="DNAJ_2"/>
    <property type="match status" value="1"/>
</dbReference>
<dbReference type="PROSITE" id="PS51188">
    <property type="entry name" value="ZF_CR"/>
    <property type="match status" value="1"/>
</dbReference>
<reference key="1">
    <citation type="journal article" date="2006" name="Nat. Biotechnol.">
        <title>The genome and transcriptomes of the anti-tumor agent Clostridium novyi-NT.</title>
        <authorList>
            <person name="Bettegowda C."/>
            <person name="Huang X."/>
            <person name="Lin J."/>
            <person name="Cheong I."/>
            <person name="Kohli M."/>
            <person name="Szabo S.A."/>
            <person name="Zhang X."/>
            <person name="Diaz L.A. Jr."/>
            <person name="Velculescu V.E."/>
            <person name="Parmigiani G."/>
            <person name="Kinzler K.W."/>
            <person name="Vogelstein B."/>
            <person name="Zhou S."/>
        </authorList>
    </citation>
    <scope>NUCLEOTIDE SEQUENCE [LARGE SCALE GENOMIC DNA]</scope>
    <source>
        <strain>NT</strain>
    </source>
</reference>